<feature type="chain" id="PRO_0000240033" description="NAD(P)H-quinone oxidoreductase subunit 1, chloroplastic">
    <location>
        <begin position="1"/>
        <end position="372"/>
    </location>
</feature>
<feature type="transmembrane region" description="Helical" evidence="1">
    <location>
        <begin position="28"/>
        <end position="48"/>
    </location>
</feature>
<feature type="transmembrane region" description="Helical" evidence="1">
    <location>
        <begin position="65"/>
        <end position="85"/>
    </location>
</feature>
<feature type="transmembrane region" description="Helical" evidence="1">
    <location>
        <begin position="97"/>
        <end position="117"/>
    </location>
</feature>
<feature type="transmembrane region" description="Helical" evidence="1">
    <location>
        <begin position="128"/>
        <end position="148"/>
    </location>
</feature>
<feature type="transmembrane region" description="Helical" evidence="1">
    <location>
        <begin position="166"/>
        <end position="186"/>
    </location>
</feature>
<feature type="transmembrane region" description="Helical" evidence="1">
    <location>
        <begin position="254"/>
        <end position="274"/>
    </location>
</feature>
<feature type="transmembrane region" description="Helical" evidence="1">
    <location>
        <begin position="312"/>
        <end position="332"/>
    </location>
</feature>
<feature type="transmembrane region" description="Helical" evidence="1">
    <location>
        <begin position="352"/>
        <end position="372"/>
    </location>
</feature>
<gene>
    <name evidence="1" type="primary">ndhA</name>
</gene>
<geneLocation type="chloroplast"/>
<protein>
    <recommendedName>
        <fullName evidence="1">NAD(P)H-quinone oxidoreductase subunit 1, chloroplastic</fullName>
        <ecNumber evidence="1">7.1.1.-</ecNumber>
    </recommendedName>
    <alternativeName>
        <fullName evidence="1">NAD(P)H dehydrogenase subunit 1</fullName>
        <shortName evidence="1">NDH subunit 1</shortName>
    </alternativeName>
    <alternativeName>
        <fullName evidence="1">NADH-plastoquinone oxidoreductase subunit 1</fullName>
    </alternativeName>
</protein>
<comment type="function">
    <text evidence="1">NDH shuttles electrons from NAD(P)H:plastoquinone, via FMN and iron-sulfur (Fe-S) centers, to quinones in the photosynthetic chain and possibly in a chloroplast respiratory chain. The immediate electron acceptor for the enzyme in this species is believed to be plastoquinone. Couples the redox reaction to proton translocation, and thus conserves the redox energy in a proton gradient.</text>
</comment>
<comment type="catalytic activity">
    <reaction evidence="1">
        <text>a plastoquinone + NADH + (n+1) H(+)(in) = a plastoquinol + NAD(+) + n H(+)(out)</text>
        <dbReference type="Rhea" id="RHEA:42608"/>
        <dbReference type="Rhea" id="RHEA-COMP:9561"/>
        <dbReference type="Rhea" id="RHEA-COMP:9562"/>
        <dbReference type="ChEBI" id="CHEBI:15378"/>
        <dbReference type="ChEBI" id="CHEBI:17757"/>
        <dbReference type="ChEBI" id="CHEBI:57540"/>
        <dbReference type="ChEBI" id="CHEBI:57945"/>
        <dbReference type="ChEBI" id="CHEBI:62192"/>
    </reaction>
</comment>
<comment type="catalytic activity">
    <reaction evidence="1">
        <text>a plastoquinone + NADPH + (n+1) H(+)(in) = a plastoquinol + NADP(+) + n H(+)(out)</text>
        <dbReference type="Rhea" id="RHEA:42612"/>
        <dbReference type="Rhea" id="RHEA-COMP:9561"/>
        <dbReference type="Rhea" id="RHEA-COMP:9562"/>
        <dbReference type="ChEBI" id="CHEBI:15378"/>
        <dbReference type="ChEBI" id="CHEBI:17757"/>
        <dbReference type="ChEBI" id="CHEBI:57783"/>
        <dbReference type="ChEBI" id="CHEBI:58349"/>
        <dbReference type="ChEBI" id="CHEBI:62192"/>
    </reaction>
</comment>
<comment type="subunit">
    <text evidence="1">NDH is composed of at least 16 different subunits, 5 of which are encoded in the nucleus.</text>
</comment>
<comment type="subcellular location">
    <subcellularLocation>
        <location evidence="1">Plastid</location>
        <location evidence="1">Chloroplast thylakoid membrane</location>
        <topology evidence="1">Multi-pass membrane protein</topology>
    </subcellularLocation>
</comment>
<comment type="similarity">
    <text evidence="1">Belongs to the complex I subunit 1 family.</text>
</comment>
<proteinExistence type="inferred from homology"/>
<organism>
    <name type="scientific">Staurastrum punctulatum</name>
    <name type="common">Green alga</name>
    <name type="synonym">Cosmoastrum punctulatum</name>
    <dbReference type="NCBI Taxonomy" id="102822"/>
    <lineage>
        <taxon>Eukaryota</taxon>
        <taxon>Viridiplantae</taxon>
        <taxon>Streptophyta</taxon>
        <taxon>Zygnematophyceae</taxon>
        <taxon>Zygnematophycidae</taxon>
        <taxon>Desmidiales</taxon>
        <taxon>Desmidiaceae</taxon>
        <taxon>Staurastrum</taxon>
    </lineage>
</organism>
<accession>Q32S02</accession>
<keyword id="KW-0150">Chloroplast</keyword>
<keyword id="KW-0472">Membrane</keyword>
<keyword id="KW-0520">NAD</keyword>
<keyword id="KW-0521">NADP</keyword>
<keyword id="KW-0934">Plastid</keyword>
<keyword id="KW-0618">Plastoquinone</keyword>
<keyword id="KW-0874">Quinone</keyword>
<keyword id="KW-0793">Thylakoid</keyword>
<keyword id="KW-1278">Translocase</keyword>
<keyword id="KW-0812">Transmembrane</keyword>
<keyword id="KW-1133">Transmembrane helix</keyword>
<evidence type="ECO:0000255" key="1">
    <source>
        <dbReference type="HAMAP-Rule" id="MF_01350"/>
    </source>
</evidence>
<dbReference type="EC" id="7.1.1.-" evidence="1"/>
<dbReference type="EMBL" id="AY958085">
    <property type="protein sequence ID" value="AAX45697.1"/>
    <property type="molecule type" value="Genomic_DNA"/>
</dbReference>
<dbReference type="RefSeq" id="YP_636374.1">
    <property type="nucleotide sequence ID" value="NC_008116.1"/>
</dbReference>
<dbReference type="SMR" id="Q32S02"/>
<dbReference type="GeneID" id="4108661"/>
<dbReference type="GO" id="GO:0009535">
    <property type="term" value="C:chloroplast thylakoid membrane"/>
    <property type="evidence" value="ECO:0007669"/>
    <property type="project" value="UniProtKB-SubCell"/>
</dbReference>
<dbReference type="GO" id="GO:0003954">
    <property type="term" value="F:NADH dehydrogenase activity"/>
    <property type="evidence" value="ECO:0007669"/>
    <property type="project" value="TreeGrafter"/>
</dbReference>
<dbReference type="GO" id="GO:0016655">
    <property type="term" value="F:oxidoreductase activity, acting on NAD(P)H, quinone or similar compound as acceptor"/>
    <property type="evidence" value="ECO:0007669"/>
    <property type="project" value="UniProtKB-UniRule"/>
</dbReference>
<dbReference type="GO" id="GO:0048038">
    <property type="term" value="F:quinone binding"/>
    <property type="evidence" value="ECO:0007669"/>
    <property type="project" value="UniProtKB-KW"/>
</dbReference>
<dbReference type="GO" id="GO:0009060">
    <property type="term" value="P:aerobic respiration"/>
    <property type="evidence" value="ECO:0007669"/>
    <property type="project" value="TreeGrafter"/>
</dbReference>
<dbReference type="GO" id="GO:0019684">
    <property type="term" value="P:photosynthesis, light reaction"/>
    <property type="evidence" value="ECO:0007669"/>
    <property type="project" value="UniProtKB-UniRule"/>
</dbReference>
<dbReference type="HAMAP" id="MF_01350">
    <property type="entry name" value="NDH1_NuoH"/>
    <property type="match status" value="1"/>
</dbReference>
<dbReference type="InterPro" id="IPR001694">
    <property type="entry name" value="NADH_UbQ_OxRdtase_su1/FPO"/>
</dbReference>
<dbReference type="InterPro" id="IPR018086">
    <property type="entry name" value="NADH_UbQ_OxRdtase_su1_CS"/>
</dbReference>
<dbReference type="NCBIfam" id="NF004741">
    <property type="entry name" value="PRK06076.1-2"/>
    <property type="match status" value="1"/>
</dbReference>
<dbReference type="NCBIfam" id="NF004744">
    <property type="entry name" value="PRK06076.1-5"/>
    <property type="match status" value="1"/>
</dbReference>
<dbReference type="PANTHER" id="PTHR11432">
    <property type="entry name" value="NADH DEHYDROGENASE SUBUNIT 1"/>
    <property type="match status" value="1"/>
</dbReference>
<dbReference type="PANTHER" id="PTHR11432:SF3">
    <property type="entry name" value="NADH-UBIQUINONE OXIDOREDUCTASE CHAIN 1"/>
    <property type="match status" value="1"/>
</dbReference>
<dbReference type="Pfam" id="PF00146">
    <property type="entry name" value="NADHdh"/>
    <property type="match status" value="1"/>
</dbReference>
<dbReference type="PROSITE" id="PS00667">
    <property type="entry name" value="COMPLEX1_ND1_1"/>
    <property type="match status" value="1"/>
</dbReference>
<dbReference type="PROSITE" id="PS00668">
    <property type="entry name" value="COMPLEX1_ND1_2"/>
    <property type="match status" value="1"/>
</dbReference>
<reference key="1">
    <citation type="journal article" date="2005" name="BMC Biol.">
        <title>The complete chloroplast DNA sequences of the charophycean green algae Staurastrum and Zygnema reveal that the chloroplast genome underwent extensive changes during the evolution of the Zygnematales.</title>
        <authorList>
            <person name="Turmel M."/>
            <person name="Otis C."/>
            <person name="Lemieux C."/>
        </authorList>
    </citation>
    <scope>NUCLEOTIDE SEQUENCE [LARGE SCALE GENOMIC DNA]</scope>
</reference>
<name>NU1C_STAPU</name>
<sequence>MTSTIAIDQKLINFLMFLGLPKSLSEFIWICIPILVVVLGSTLGVLVIVWLERKISAAVQQRIGPEYAGPLGIIQALIDGLKLILKEDIIPSKGDNWLFTLGPAIVVIPIVLSYLVVPFGPNLIVADIGIGIFFWIAISSVAPMGLLIAGYGSNNKYSLLGGLRAAAQAISYEIPLALCVLAIILMSHSLSTIEIVEQQAKYGILGWNIWRQPIGFFVFLISSLAECERLPFDLPEAEEELVAGYQTEYCGIKFGLFYVASYINLLVSALFVSVLYLGGWDFSIPFLNDYLTSTDFFSQWELNETIVGIMTGIIGLGITLVKAYIFLFLAVLTRWTLPRIRMDQLLDLGWKFLLPVCLGNLLLTASFQITLL</sequence>